<name>SERC_SALAR</name>
<dbReference type="EC" id="2.6.1.52" evidence="1"/>
<dbReference type="EMBL" id="CP000880">
    <property type="protein sequence ID" value="ABX21866.1"/>
    <property type="molecule type" value="Genomic_DNA"/>
</dbReference>
<dbReference type="SMR" id="A9MHX6"/>
<dbReference type="STRING" id="41514.SARI_01986"/>
<dbReference type="KEGG" id="ses:SARI_01986"/>
<dbReference type="HOGENOM" id="CLU_034866_0_2_6"/>
<dbReference type="UniPathway" id="UPA00135">
    <property type="reaction ID" value="UER00197"/>
</dbReference>
<dbReference type="UniPathway" id="UPA00244">
    <property type="reaction ID" value="UER00311"/>
</dbReference>
<dbReference type="Proteomes" id="UP000002084">
    <property type="component" value="Chromosome"/>
</dbReference>
<dbReference type="GO" id="GO:0005737">
    <property type="term" value="C:cytoplasm"/>
    <property type="evidence" value="ECO:0007669"/>
    <property type="project" value="UniProtKB-SubCell"/>
</dbReference>
<dbReference type="GO" id="GO:0004648">
    <property type="term" value="F:O-phospho-L-serine:2-oxoglutarate aminotransferase activity"/>
    <property type="evidence" value="ECO:0007669"/>
    <property type="project" value="UniProtKB-UniRule"/>
</dbReference>
<dbReference type="GO" id="GO:0030170">
    <property type="term" value="F:pyridoxal phosphate binding"/>
    <property type="evidence" value="ECO:0007669"/>
    <property type="project" value="UniProtKB-UniRule"/>
</dbReference>
<dbReference type="GO" id="GO:0006564">
    <property type="term" value="P:L-serine biosynthetic process"/>
    <property type="evidence" value="ECO:0007669"/>
    <property type="project" value="UniProtKB-UniRule"/>
</dbReference>
<dbReference type="GO" id="GO:0008615">
    <property type="term" value="P:pyridoxine biosynthetic process"/>
    <property type="evidence" value="ECO:0007669"/>
    <property type="project" value="UniProtKB-UniRule"/>
</dbReference>
<dbReference type="CDD" id="cd00611">
    <property type="entry name" value="PSAT_like"/>
    <property type="match status" value="1"/>
</dbReference>
<dbReference type="FunFam" id="3.40.640.10:FF:000010">
    <property type="entry name" value="Phosphoserine aminotransferase"/>
    <property type="match status" value="1"/>
</dbReference>
<dbReference type="FunFam" id="3.90.1150.10:FF:000006">
    <property type="entry name" value="Phosphoserine aminotransferase"/>
    <property type="match status" value="1"/>
</dbReference>
<dbReference type="Gene3D" id="3.90.1150.10">
    <property type="entry name" value="Aspartate Aminotransferase, domain 1"/>
    <property type="match status" value="1"/>
</dbReference>
<dbReference type="Gene3D" id="3.40.640.10">
    <property type="entry name" value="Type I PLP-dependent aspartate aminotransferase-like (Major domain)"/>
    <property type="match status" value="1"/>
</dbReference>
<dbReference type="HAMAP" id="MF_00160">
    <property type="entry name" value="SerC_aminotrans_5"/>
    <property type="match status" value="1"/>
</dbReference>
<dbReference type="InterPro" id="IPR000192">
    <property type="entry name" value="Aminotrans_V_dom"/>
</dbReference>
<dbReference type="InterPro" id="IPR020578">
    <property type="entry name" value="Aminotrans_V_PyrdxlP_BS"/>
</dbReference>
<dbReference type="InterPro" id="IPR022278">
    <property type="entry name" value="Pser_aminoTfrase"/>
</dbReference>
<dbReference type="InterPro" id="IPR015424">
    <property type="entry name" value="PyrdxlP-dep_Trfase"/>
</dbReference>
<dbReference type="InterPro" id="IPR015421">
    <property type="entry name" value="PyrdxlP-dep_Trfase_major"/>
</dbReference>
<dbReference type="InterPro" id="IPR015422">
    <property type="entry name" value="PyrdxlP-dep_Trfase_small"/>
</dbReference>
<dbReference type="NCBIfam" id="NF003764">
    <property type="entry name" value="PRK05355.1"/>
    <property type="match status" value="1"/>
</dbReference>
<dbReference type="NCBIfam" id="TIGR01364">
    <property type="entry name" value="serC_1"/>
    <property type="match status" value="1"/>
</dbReference>
<dbReference type="PANTHER" id="PTHR43247">
    <property type="entry name" value="PHOSPHOSERINE AMINOTRANSFERASE"/>
    <property type="match status" value="1"/>
</dbReference>
<dbReference type="PANTHER" id="PTHR43247:SF1">
    <property type="entry name" value="PHOSPHOSERINE AMINOTRANSFERASE"/>
    <property type="match status" value="1"/>
</dbReference>
<dbReference type="Pfam" id="PF00266">
    <property type="entry name" value="Aminotran_5"/>
    <property type="match status" value="1"/>
</dbReference>
<dbReference type="PIRSF" id="PIRSF000525">
    <property type="entry name" value="SerC"/>
    <property type="match status" value="1"/>
</dbReference>
<dbReference type="SUPFAM" id="SSF53383">
    <property type="entry name" value="PLP-dependent transferases"/>
    <property type="match status" value="1"/>
</dbReference>
<dbReference type="PROSITE" id="PS00595">
    <property type="entry name" value="AA_TRANSFER_CLASS_5"/>
    <property type="match status" value="1"/>
</dbReference>
<comment type="function">
    <text evidence="1">Catalyzes the reversible conversion of 3-phosphohydroxypyruvate to phosphoserine and of 3-hydroxy-2-oxo-4-phosphonooxybutanoate to phosphohydroxythreonine.</text>
</comment>
<comment type="catalytic activity">
    <reaction evidence="1">
        <text>O-phospho-L-serine + 2-oxoglutarate = 3-phosphooxypyruvate + L-glutamate</text>
        <dbReference type="Rhea" id="RHEA:14329"/>
        <dbReference type="ChEBI" id="CHEBI:16810"/>
        <dbReference type="ChEBI" id="CHEBI:18110"/>
        <dbReference type="ChEBI" id="CHEBI:29985"/>
        <dbReference type="ChEBI" id="CHEBI:57524"/>
        <dbReference type="EC" id="2.6.1.52"/>
    </reaction>
</comment>
<comment type="catalytic activity">
    <reaction evidence="1">
        <text>4-(phosphooxy)-L-threonine + 2-oxoglutarate = (R)-3-hydroxy-2-oxo-4-phosphooxybutanoate + L-glutamate</text>
        <dbReference type="Rhea" id="RHEA:16573"/>
        <dbReference type="ChEBI" id="CHEBI:16810"/>
        <dbReference type="ChEBI" id="CHEBI:29985"/>
        <dbReference type="ChEBI" id="CHEBI:58452"/>
        <dbReference type="ChEBI" id="CHEBI:58538"/>
        <dbReference type="EC" id="2.6.1.52"/>
    </reaction>
</comment>
<comment type="cofactor">
    <cofactor evidence="1">
        <name>pyridoxal 5'-phosphate</name>
        <dbReference type="ChEBI" id="CHEBI:597326"/>
    </cofactor>
    <text evidence="1">Binds 1 pyridoxal phosphate per subunit.</text>
</comment>
<comment type="pathway">
    <text evidence="1">Amino-acid biosynthesis; L-serine biosynthesis; L-serine from 3-phospho-D-glycerate: step 2/3.</text>
</comment>
<comment type="pathway">
    <text evidence="1">Cofactor biosynthesis; pyridoxine 5'-phosphate biosynthesis; pyridoxine 5'-phosphate from D-erythrose 4-phosphate: step 3/5.</text>
</comment>
<comment type="subunit">
    <text evidence="1">Homodimer.</text>
</comment>
<comment type="subcellular location">
    <subcellularLocation>
        <location evidence="1">Cytoplasm</location>
    </subcellularLocation>
</comment>
<comment type="similarity">
    <text evidence="1">Belongs to the class-V pyridoxal-phosphate-dependent aminotransferase family. SerC subfamily.</text>
</comment>
<reference key="1">
    <citation type="submission" date="2007-11" db="EMBL/GenBank/DDBJ databases">
        <authorList>
            <consortium name="The Salmonella enterica serovar Arizonae Genome Sequencing Project"/>
            <person name="McClelland M."/>
            <person name="Sanderson E.K."/>
            <person name="Porwollik S."/>
            <person name="Spieth J."/>
            <person name="Clifton W.S."/>
            <person name="Fulton R."/>
            <person name="Chunyan W."/>
            <person name="Wollam A."/>
            <person name="Shah N."/>
            <person name="Pepin K."/>
            <person name="Bhonagiri V."/>
            <person name="Nash W."/>
            <person name="Johnson M."/>
            <person name="Thiruvilangam P."/>
            <person name="Wilson R."/>
        </authorList>
    </citation>
    <scope>NUCLEOTIDE SEQUENCE [LARGE SCALE GENOMIC DNA]</scope>
    <source>
        <strain>ATCC BAA-731 / CDC346-86 / RSK2980</strain>
    </source>
</reference>
<accession>A9MHX6</accession>
<keyword id="KW-0028">Amino-acid biosynthesis</keyword>
<keyword id="KW-0032">Aminotransferase</keyword>
<keyword id="KW-0963">Cytoplasm</keyword>
<keyword id="KW-0663">Pyridoxal phosphate</keyword>
<keyword id="KW-0664">Pyridoxine biosynthesis</keyword>
<keyword id="KW-1185">Reference proteome</keyword>
<keyword id="KW-0718">Serine biosynthesis</keyword>
<keyword id="KW-0808">Transferase</keyword>
<proteinExistence type="inferred from homology"/>
<feature type="chain" id="PRO_1000203551" description="Phosphoserine aminotransferase">
    <location>
        <begin position="1"/>
        <end position="362"/>
    </location>
</feature>
<feature type="binding site" evidence="1">
    <location>
        <position position="9"/>
    </location>
    <ligand>
        <name>L-glutamate</name>
        <dbReference type="ChEBI" id="CHEBI:29985"/>
    </ligand>
</feature>
<feature type="binding site" evidence="1">
    <location>
        <position position="42"/>
    </location>
    <ligand>
        <name>L-glutamate</name>
        <dbReference type="ChEBI" id="CHEBI:29985"/>
    </ligand>
</feature>
<feature type="binding site" evidence="1">
    <location>
        <begin position="76"/>
        <end position="77"/>
    </location>
    <ligand>
        <name>pyridoxal 5'-phosphate</name>
        <dbReference type="ChEBI" id="CHEBI:597326"/>
    </ligand>
</feature>
<feature type="binding site" evidence="1">
    <location>
        <position position="102"/>
    </location>
    <ligand>
        <name>pyridoxal 5'-phosphate</name>
        <dbReference type="ChEBI" id="CHEBI:597326"/>
    </ligand>
</feature>
<feature type="binding site" evidence="1">
    <location>
        <position position="153"/>
    </location>
    <ligand>
        <name>pyridoxal 5'-phosphate</name>
        <dbReference type="ChEBI" id="CHEBI:597326"/>
    </ligand>
</feature>
<feature type="binding site" evidence="1">
    <location>
        <position position="174"/>
    </location>
    <ligand>
        <name>pyridoxal 5'-phosphate</name>
        <dbReference type="ChEBI" id="CHEBI:597326"/>
    </ligand>
</feature>
<feature type="binding site" evidence="1">
    <location>
        <position position="197"/>
    </location>
    <ligand>
        <name>pyridoxal 5'-phosphate</name>
        <dbReference type="ChEBI" id="CHEBI:597326"/>
    </ligand>
</feature>
<feature type="binding site" evidence="1">
    <location>
        <begin position="239"/>
        <end position="240"/>
    </location>
    <ligand>
        <name>pyridoxal 5'-phosphate</name>
        <dbReference type="ChEBI" id="CHEBI:597326"/>
    </ligand>
</feature>
<feature type="modified residue" description="N6-(pyridoxal phosphate)lysine" evidence="1">
    <location>
        <position position="198"/>
    </location>
</feature>
<evidence type="ECO:0000255" key="1">
    <source>
        <dbReference type="HAMAP-Rule" id="MF_00160"/>
    </source>
</evidence>
<sequence length="362" mass="39898">MAQVFNFSSGPAMLPTEVLKLAQQELRDWHDLGTSVMEISHRGKEFIQVAEEAEQDFRDLLSIPSNYKVLFCHGGGRGQFAGVPLNLLGDRTTADYVDAGYWAASAIKEAKKYCAPQIIDAKITVDGKRAVKPMREWQLSDNAAYLHYCPNETIDGIAIDETPDFGPGVVVTADFSSTILSAPLDVSRYGVIYAGAQKNIGPAGLTLVIVREDLLGKAHENCPSILDYTVLNDNDSMFNTPPTFAWYLSGLVFKWLKAQGGVAAMHKINQQKAQLLYGVIDNSDFYRNDVAQANRSRMNVPFQLADNALDKVFLEESFAAGLHALKGHRVVGGMRASIYNAMPIEGVKALTDFMIDFERRHG</sequence>
<protein>
    <recommendedName>
        <fullName evidence="1">Phosphoserine aminotransferase</fullName>
        <ecNumber evidence="1">2.6.1.52</ecNumber>
    </recommendedName>
    <alternativeName>
        <fullName evidence="1">Phosphohydroxythreonine aminotransferase</fullName>
        <shortName evidence="1">PSAT</shortName>
    </alternativeName>
</protein>
<organism>
    <name type="scientific">Salmonella arizonae (strain ATCC BAA-731 / CDC346-86 / RSK2980)</name>
    <dbReference type="NCBI Taxonomy" id="41514"/>
    <lineage>
        <taxon>Bacteria</taxon>
        <taxon>Pseudomonadati</taxon>
        <taxon>Pseudomonadota</taxon>
        <taxon>Gammaproteobacteria</taxon>
        <taxon>Enterobacterales</taxon>
        <taxon>Enterobacteriaceae</taxon>
        <taxon>Salmonella</taxon>
    </lineage>
</organism>
<gene>
    <name evidence="1" type="primary">serC</name>
    <name type="ordered locus">SARI_01986</name>
</gene>